<sequence>MSFTVKVKEELLGLGTKSKSELAAIMKMSGSLGIASQGLTLSITTENAKIARHIYELLLSFYQVKSDIRHHQKTNLRKNRVYTVFLDEKVEDILSDLHLADAFFGIQEGIDPLILSDDEASRAYLRGAFLSNGSMRDPESGKYQLEIVSVYLDHAQGLASLMQRFLLDAKTIERKKGAVTYLQRAEDIMDFLIVVGAMEAMAEFEAVKILRETRNDLNRANNAETANIARTVTASMKTINNIVKIMETSGLENLPIDLQEVAHLRVNHPDYSIQQLADSLSKPLTKSGVNHRLRKINKIADEL</sequence>
<name>WHIA_STRGC</name>
<keyword id="KW-0131">Cell cycle</keyword>
<keyword id="KW-0132">Cell division</keyword>
<keyword id="KW-0238">DNA-binding</keyword>
<keyword id="KW-1185">Reference proteome</keyword>
<comment type="function">
    <text evidence="1">Involved in cell division and chromosome segregation.</text>
</comment>
<comment type="similarity">
    <text evidence="1">Belongs to the WhiA family.</text>
</comment>
<accession>A8AWT7</accession>
<dbReference type="EMBL" id="CP000725">
    <property type="protein sequence ID" value="ABV09711.1"/>
    <property type="molecule type" value="Genomic_DNA"/>
</dbReference>
<dbReference type="RefSeq" id="WP_012000377.1">
    <property type="nucleotide sequence ID" value="NC_009785.1"/>
</dbReference>
<dbReference type="SMR" id="A8AWT7"/>
<dbReference type="STRING" id="467705.SGO_0956"/>
<dbReference type="KEGG" id="sgo:SGO_0956"/>
<dbReference type="eggNOG" id="COG1481">
    <property type="taxonomic scope" value="Bacteria"/>
</dbReference>
<dbReference type="HOGENOM" id="CLU_053282_0_0_9"/>
<dbReference type="Proteomes" id="UP000001131">
    <property type="component" value="Chromosome"/>
</dbReference>
<dbReference type="GO" id="GO:0003677">
    <property type="term" value="F:DNA binding"/>
    <property type="evidence" value="ECO:0007669"/>
    <property type="project" value="UniProtKB-UniRule"/>
</dbReference>
<dbReference type="GO" id="GO:0051301">
    <property type="term" value="P:cell division"/>
    <property type="evidence" value="ECO:0007669"/>
    <property type="project" value="UniProtKB-UniRule"/>
</dbReference>
<dbReference type="GO" id="GO:0043937">
    <property type="term" value="P:regulation of sporulation"/>
    <property type="evidence" value="ECO:0007669"/>
    <property type="project" value="InterPro"/>
</dbReference>
<dbReference type="Gene3D" id="3.10.28.10">
    <property type="entry name" value="Homing endonucleases"/>
    <property type="match status" value="1"/>
</dbReference>
<dbReference type="HAMAP" id="MF_01420">
    <property type="entry name" value="HTH_type_WhiA"/>
    <property type="match status" value="1"/>
</dbReference>
<dbReference type="InterPro" id="IPR027434">
    <property type="entry name" value="Homing_endonucl"/>
</dbReference>
<dbReference type="InterPro" id="IPR018478">
    <property type="entry name" value="Sporu_reg_WhiA_N_dom"/>
</dbReference>
<dbReference type="InterPro" id="IPR003802">
    <property type="entry name" value="Sporulation_regulator_WhiA"/>
</dbReference>
<dbReference type="InterPro" id="IPR023054">
    <property type="entry name" value="Sporulation_regulator_WhiA_C"/>
</dbReference>
<dbReference type="InterPro" id="IPR039518">
    <property type="entry name" value="WhiA_LAGLIDADG_dom"/>
</dbReference>
<dbReference type="NCBIfam" id="TIGR00647">
    <property type="entry name" value="DNA_bind_WhiA"/>
    <property type="match status" value="1"/>
</dbReference>
<dbReference type="PANTHER" id="PTHR37307">
    <property type="entry name" value="CELL DIVISION PROTEIN WHIA-RELATED"/>
    <property type="match status" value="1"/>
</dbReference>
<dbReference type="PANTHER" id="PTHR37307:SF1">
    <property type="entry name" value="CELL DIVISION PROTEIN WHIA-RELATED"/>
    <property type="match status" value="1"/>
</dbReference>
<dbReference type="Pfam" id="PF02650">
    <property type="entry name" value="HTH_WhiA"/>
    <property type="match status" value="1"/>
</dbReference>
<dbReference type="Pfam" id="PF14527">
    <property type="entry name" value="LAGLIDADG_WhiA"/>
    <property type="match status" value="1"/>
</dbReference>
<dbReference type="Pfam" id="PF10298">
    <property type="entry name" value="WhiA_N"/>
    <property type="match status" value="1"/>
</dbReference>
<dbReference type="SUPFAM" id="SSF55608">
    <property type="entry name" value="Homing endonucleases"/>
    <property type="match status" value="1"/>
</dbReference>
<protein>
    <recommendedName>
        <fullName evidence="1">Probable cell division protein WhiA</fullName>
    </recommendedName>
</protein>
<gene>
    <name evidence="1" type="primary">whiA</name>
    <name type="ordered locus">SGO_0956</name>
</gene>
<evidence type="ECO:0000255" key="1">
    <source>
        <dbReference type="HAMAP-Rule" id="MF_01420"/>
    </source>
</evidence>
<organism>
    <name type="scientific">Streptococcus gordonii (strain Challis / ATCC 35105 / BCRC 15272 / CH1 / DL1 / V288)</name>
    <dbReference type="NCBI Taxonomy" id="467705"/>
    <lineage>
        <taxon>Bacteria</taxon>
        <taxon>Bacillati</taxon>
        <taxon>Bacillota</taxon>
        <taxon>Bacilli</taxon>
        <taxon>Lactobacillales</taxon>
        <taxon>Streptococcaceae</taxon>
        <taxon>Streptococcus</taxon>
    </lineage>
</organism>
<reference key="1">
    <citation type="journal article" date="2007" name="J. Bacteriol.">
        <title>Genome-wide transcriptional changes in Streptococcus gordonii in response to competence signaling peptide.</title>
        <authorList>
            <person name="Vickerman M.M."/>
            <person name="Iobst S."/>
            <person name="Jesionowski A.M."/>
            <person name="Gill S.R."/>
        </authorList>
    </citation>
    <scope>NUCLEOTIDE SEQUENCE [LARGE SCALE GENOMIC DNA]</scope>
    <source>
        <strain>Challis / ATCC 35105 / BCRC 15272 / CH1 / DL1 / V288</strain>
    </source>
</reference>
<proteinExistence type="inferred from homology"/>
<feature type="chain" id="PRO_0000376574" description="Probable cell division protein WhiA">
    <location>
        <begin position="1"/>
        <end position="303"/>
    </location>
</feature>
<feature type="DNA-binding region" description="H-T-H motif" evidence="1">
    <location>
        <begin position="272"/>
        <end position="303"/>
    </location>
</feature>